<accession>A4WHB4</accession>
<comment type="catalytic activity">
    <reaction evidence="1">
        <text>1-(5-phospho-beta-D-ribosyl)-ATP + H2O = 1-(5-phospho-beta-D-ribosyl)-5'-AMP + diphosphate + H(+)</text>
        <dbReference type="Rhea" id="RHEA:22828"/>
        <dbReference type="ChEBI" id="CHEBI:15377"/>
        <dbReference type="ChEBI" id="CHEBI:15378"/>
        <dbReference type="ChEBI" id="CHEBI:33019"/>
        <dbReference type="ChEBI" id="CHEBI:59457"/>
        <dbReference type="ChEBI" id="CHEBI:73183"/>
        <dbReference type="EC" id="3.6.1.31"/>
    </reaction>
</comment>
<comment type="pathway">
    <text evidence="1">Amino-acid biosynthesis; L-histidine biosynthesis; L-histidine from 5-phospho-alpha-D-ribose 1-diphosphate: step 2/9.</text>
</comment>
<comment type="subcellular location">
    <subcellularLocation>
        <location evidence="1">Cytoplasm</location>
    </subcellularLocation>
</comment>
<comment type="similarity">
    <text evidence="1">Belongs to the PRA-PH family.</text>
</comment>
<feature type="chain" id="PRO_1000063374" description="Phosphoribosyl-ATP pyrophosphatase">
    <location>
        <begin position="1"/>
        <end position="94"/>
    </location>
</feature>
<sequence>MSCKVLEELEEVIRRRIEEGNPESYTYRLYSSGIPHIARKVGEEAVEAAVAAIAEGRERLAEEAADLLYHLLVLLNAAGLSLRDVCNVLEKRRK</sequence>
<reference key="1">
    <citation type="submission" date="2007-04" db="EMBL/GenBank/DDBJ databases">
        <title>Complete sequence of Pyrobaculum arsenaticum DSM 13514.</title>
        <authorList>
            <consortium name="US DOE Joint Genome Institute"/>
            <person name="Copeland A."/>
            <person name="Lucas S."/>
            <person name="Lapidus A."/>
            <person name="Barry K."/>
            <person name="Glavina del Rio T."/>
            <person name="Dalin E."/>
            <person name="Tice H."/>
            <person name="Pitluck S."/>
            <person name="Chain P."/>
            <person name="Malfatti S."/>
            <person name="Shin M."/>
            <person name="Vergez L."/>
            <person name="Schmutz J."/>
            <person name="Larimer F."/>
            <person name="Land M."/>
            <person name="Hauser L."/>
            <person name="Kyrpides N."/>
            <person name="Mikhailova N."/>
            <person name="Cozen A.E."/>
            <person name="Fitz-Gibbon S.T."/>
            <person name="House C.H."/>
            <person name="Saltikov C."/>
            <person name="Lowe T.M."/>
            <person name="Richardson P."/>
        </authorList>
    </citation>
    <scope>NUCLEOTIDE SEQUENCE [LARGE SCALE GENOMIC DNA]</scope>
    <source>
        <strain>ATCC 700994 / DSM 13514 / JCM 11321 / PZ6</strain>
    </source>
</reference>
<evidence type="ECO:0000255" key="1">
    <source>
        <dbReference type="HAMAP-Rule" id="MF_01020"/>
    </source>
</evidence>
<dbReference type="EC" id="3.6.1.31" evidence="1"/>
<dbReference type="EMBL" id="CP000660">
    <property type="protein sequence ID" value="ABP49781.1"/>
    <property type="molecule type" value="Genomic_DNA"/>
</dbReference>
<dbReference type="SMR" id="A4WHB4"/>
<dbReference type="STRING" id="340102.Pars_0166"/>
<dbReference type="KEGG" id="pas:Pars_0166"/>
<dbReference type="HOGENOM" id="CLU_123337_0_0_2"/>
<dbReference type="UniPathway" id="UPA00031">
    <property type="reaction ID" value="UER00007"/>
</dbReference>
<dbReference type="Proteomes" id="UP000001567">
    <property type="component" value="Chromosome"/>
</dbReference>
<dbReference type="GO" id="GO:0005737">
    <property type="term" value="C:cytoplasm"/>
    <property type="evidence" value="ECO:0007669"/>
    <property type="project" value="UniProtKB-SubCell"/>
</dbReference>
<dbReference type="GO" id="GO:0005524">
    <property type="term" value="F:ATP binding"/>
    <property type="evidence" value="ECO:0007669"/>
    <property type="project" value="UniProtKB-KW"/>
</dbReference>
<dbReference type="GO" id="GO:0004636">
    <property type="term" value="F:phosphoribosyl-ATP diphosphatase activity"/>
    <property type="evidence" value="ECO:0007669"/>
    <property type="project" value="UniProtKB-UniRule"/>
</dbReference>
<dbReference type="GO" id="GO:0000105">
    <property type="term" value="P:L-histidine biosynthetic process"/>
    <property type="evidence" value="ECO:0007669"/>
    <property type="project" value="UniProtKB-UniRule"/>
</dbReference>
<dbReference type="CDD" id="cd11534">
    <property type="entry name" value="NTP-PPase_HisIE_like"/>
    <property type="match status" value="1"/>
</dbReference>
<dbReference type="FunFam" id="1.10.287.1080:FF:000002">
    <property type="entry name" value="Histidine biosynthesis bifunctional protein HisIE"/>
    <property type="match status" value="1"/>
</dbReference>
<dbReference type="Gene3D" id="1.10.287.1080">
    <property type="entry name" value="MazG-like"/>
    <property type="match status" value="1"/>
</dbReference>
<dbReference type="HAMAP" id="MF_01020">
    <property type="entry name" value="HisE"/>
    <property type="match status" value="1"/>
</dbReference>
<dbReference type="InterPro" id="IPR008179">
    <property type="entry name" value="HisE"/>
</dbReference>
<dbReference type="InterPro" id="IPR021130">
    <property type="entry name" value="PRib-ATP_PPHydrolase-like"/>
</dbReference>
<dbReference type="NCBIfam" id="TIGR03188">
    <property type="entry name" value="histidine_hisI"/>
    <property type="match status" value="1"/>
</dbReference>
<dbReference type="PANTHER" id="PTHR42945">
    <property type="entry name" value="HISTIDINE BIOSYNTHESIS BIFUNCTIONAL PROTEIN"/>
    <property type="match status" value="1"/>
</dbReference>
<dbReference type="PANTHER" id="PTHR42945:SF1">
    <property type="entry name" value="HISTIDINE BIOSYNTHESIS BIFUNCTIONAL PROTEIN HIS7"/>
    <property type="match status" value="1"/>
</dbReference>
<dbReference type="Pfam" id="PF01503">
    <property type="entry name" value="PRA-PH"/>
    <property type="match status" value="1"/>
</dbReference>
<dbReference type="SUPFAM" id="SSF101386">
    <property type="entry name" value="all-alpha NTP pyrophosphatases"/>
    <property type="match status" value="1"/>
</dbReference>
<name>HIS2_PYRAR</name>
<protein>
    <recommendedName>
        <fullName evidence="1">Phosphoribosyl-ATP pyrophosphatase</fullName>
        <shortName evidence="1">PRA-PH</shortName>
        <ecNumber evidence="1">3.6.1.31</ecNumber>
    </recommendedName>
</protein>
<proteinExistence type="inferred from homology"/>
<gene>
    <name evidence="1" type="primary">hisE</name>
    <name type="ordered locus">Pars_0166</name>
</gene>
<organism>
    <name type="scientific">Pyrobaculum arsenaticum (strain DSM 13514 / JCM 11321 / PZ6)</name>
    <dbReference type="NCBI Taxonomy" id="340102"/>
    <lineage>
        <taxon>Archaea</taxon>
        <taxon>Thermoproteota</taxon>
        <taxon>Thermoprotei</taxon>
        <taxon>Thermoproteales</taxon>
        <taxon>Thermoproteaceae</taxon>
        <taxon>Pyrobaculum</taxon>
    </lineage>
</organism>
<keyword id="KW-0028">Amino-acid biosynthesis</keyword>
<keyword id="KW-0067">ATP-binding</keyword>
<keyword id="KW-0963">Cytoplasm</keyword>
<keyword id="KW-0368">Histidine biosynthesis</keyword>
<keyword id="KW-0378">Hydrolase</keyword>
<keyword id="KW-0547">Nucleotide-binding</keyword>